<feature type="chain" id="PRO_1000059108" description="Cell division topological specificity factor">
    <location>
        <begin position="1"/>
        <end position="93"/>
    </location>
</feature>
<reference key="1">
    <citation type="submission" date="2007-10" db="EMBL/GenBank/DDBJ databases">
        <title>Complete genome of Alkaliphilus oremlandii OhILAs.</title>
        <authorList>
            <person name="Copeland A."/>
            <person name="Lucas S."/>
            <person name="Lapidus A."/>
            <person name="Barry K."/>
            <person name="Detter J.C."/>
            <person name="Glavina del Rio T."/>
            <person name="Hammon N."/>
            <person name="Israni S."/>
            <person name="Dalin E."/>
            <person name="Tice H."/>
            <person name="Pitluck S."/>
            <person name="Chain P."/>
            <person name="Malfatti S."/>
            <person name="Shin M."/>
            <person name="Vergez L."/>
            <person name="Schmutz J."/>
            <person name="Larimer F."/>
            <person name="Land M."/>
            <person name="Hauser L."/>
            <person name="Kyrpides N."/>
            <person name="Mikhailova N."/>
            <person name="Stolz J.F."/>
            <person name="Dawson A."/>
            <person name="Fisher E."/>
            <person name="Crable B."/>
            <person name="Perera E."/>
            <person name="Lisak J."/>
            <person name="Ranganathan M."/>
            <person name="Basu P."/>
            <person name="Richardson P."/>
        </authorList>
    </citation>
    <scope>NUCLEOTIDE SEQUENCE [LARGE SCALE GENOMIC DNA]</scope>
    <source>
        <strain>OhILAs</strain>
    </source>
</reference>
<gene>
    <name evidence="1" type="primary">minE</name>
    <name type="ordered locus">Clos_1759</name>
</gene>
<protein>
    <recommendedName>
        <fullName evidence="1">Cell division topological specificity factor</fullName>
    </recommendedName>
</protein>
<keyword id="KW-0131">Cell cycle</keyword>
<keyword id="KW-0132">Cell division</keyword>
<keyword id="KW-1185">Reference proteome</keyword>
<dbReference type="EMBL" id="CP000853">
    <property type="protein sequence ID" value="ABW19299.1"/>
    <property type="molecule type" value="Genomic_DNA"/>
</dbReference>
<dbReference type="RefSeq" id="WP_012159611.1">
    <property type="nucleotide sequence ID" value="NC_009922.1"/>
</dbReference>
<dbReference type="STRING" id="350688.Clos_1759"/>
<dbReference type="KEGG" id="aoe:Clos_1759"/>
<dbReference type="eggNOG" id="COG0851">
    <property type="taxonomic scope" value="Bacteria"/>
</dbReference>
<dbReference type="HOGENOM" id="CLU_137929_1_1_9"/>
<dbReference type="OrthoDB" id="9796578at2"/>
<dbReference type="Proteomes" id="UP000000269">
    <property type="component" value="Chromosome"/>
</dbReference>
<dbReference type="GO" id="GO:0051301">
    <property type="term" value="P:cell division"/>
    <property type="evidence" value="ECO:0007669"/>
    <property type="project" value="UniProtKB-KW"/>
</dbReference>
<dbReference type="GO" id="GO:0032955">
    <property type="term" value="P:regulation of division septum assembly"/>
    <property type="evidence" value="ECO:0007669"/>
    <property type="project" value="InterPro"/>
</dbReference>
<dbReference type="Gene3D" id="3.30.1070.10">
    <property type="entry name" value="Cell division topological specificity factor MinE"/>
    <property type="match status" value="1"/>
</dbReference>
<dbReference type="HAMAP" id="MF_00262">
    <property type="entry name" value="MinE"/>
    <property type="match status" value="1"/>
</dbReference>
<dbReference type="InterPro" id="IPR005527">
    <property type="entry name" value="MinE"/>
</dbReference>
<dbReference type="InterPro" id="IPR036707">
    <property type="entry name" value="MinE_sf"/>
</dbReference>
<dbReference type="NCBIfam" id="TIGR01215">
    <property type="entry name" value="minE"/>
    <property type="match status" value="1"/>
</dbReference>
<dbReference type="Pfam" id="PF03776">
    <property type="entry name" value="MinE"/>
    <property type="match status" value="1"/>
</dbReference>
<dbReference type="SUPFAM" id="SSF55229">
    <property type="entry name" value="Cell division protein MinE topological specificity domain"/>
    <property type="match status" value="1"/>
</dbReference>
<organism>
    <name type="scientific">Alkaliphilus oremlandii (strain OhILAs)</name>
    <name type="common">Clostridium oremlandii (strain OhILAs)</name>
    <dbReference type="NCBI Taxonomy" id="350688"/>
    <lineage>
        <taxon>Bacteria</taxon>
        <taxon>Bacillati</taxon>
        <taxon>Bacillota</taxon>
        <taxon>Clostridia</taxon>
        <taxon>Peptostreptococcales</taxon>
        <taxon>Natronincolaceae</taxon>
        <taxon>Alkaliphilus</taxon>
    </lineage>
</organism>
<evidence type="ECO:0000255" key="1">
    <source>
        <dbReference type="HAMAP-Rule" id="MF_00262"/>
    </source>
</evidence>
<sequence length="93" mass="10731">MDLWKFFSKESSTSKNVAKERLKLVLVHDRANCSPDFLEMVKGDIIKVISDYMEIDEDGLDIRLTKTKREYDDASIPALVANIPIKKMKDRGR</sequence>
<accession>A8MHL7</accession>
<name>MINE_ALKOO</name>
<proteinExistence type="inferred from homology"/>
<comment type="function">
    <text evidence="1">Prevents the cell division inhibition by proteins MinC and MinD at internal division sites while permitting inhibition at polar sites. This ensures cell division at the proper site by restricting the formation of a division septum at the midpoint of the long axis of the cell.</text>
</comment>
<comment type="similarity">
    <text evidence="1">Belongs to the MinE family.</text>
</comment>